<keyword id="KW-1003">Cell membrane</keyword>
<keyword id="KW-0472">Membrane</keyword>
<keyword id="KW-1185">Reference proteome</keyword>
<keyword id="KW-0812">Transmembrane</keyword>
<keyword id="KW-1133">Transmembrane helix</keyword>
<evidence type="ECO:0000255" key="1"/>
<evidence type="ECO:0000305" key="2"/>
<protein>
    <recommendedName>
        <fullName>Uncharacterized protein AF_1949</fullName>
    </recommendedName>
</protein>
<accession>O28330</accession>
<dbReference type="EMBL" id="AE000782">
    <property type="protein sequence ID" value="AAB89307.1"/>
    <property type="molecule type" value="Genomic_DNA"/>
</dbReference>
<dbReference type="PIR" id="D69493">
    <property type="entry name" value="D69493"/>
</dbReference>
<dbReference type="SMR" id="O28330"/>
<dbReference type="STRING" id="224325.AF_1949"/>
<dbReference type="PaxDb" id="224325-AF_1949"/>
<dbReference type="EnsemblBacteria" id="AAB89307">
    <property type="protein sequence ID" value="AAB89307"/>
    <property type="gene ID" value="AF_1949"/>
</dbReference>
<dbReference type="KEGG" id="afu:AF_1949"/>
<dbReference type="eggNOG" id="arCOG02537">
    <property type="taxonomic scope" value="Archaea"/>
</dbReference>
<dbReference type="HOGENOM" id="CLU_1631533_0_0_2"/>
<dbReference type="Proteomes" id="UP000002199">
    <property type="component" value="Chromosome"/>
</dbReference>
<dbReference type="GO" id="GO:0005886">
    <property type="term" value="C:plasma membrane"/>
    <property type="evidence" value="ECO:0007669"/>
    <property type="project" value="UniProtKB-SubCell"/>
</dbReference>
<sequence length="165" mass="17588">MLRMRALWLALVLLILSIPAVSAQITVTRDLPDSAKVGDEITVTLALTIGSEKPAGAIIEESIPDGASYISSSPEATVSEGKLKWAFYGEQLKDMTLQYTVKVEKAGKLEFSGTVKTLLGNENIGGDSELEVSEKSAEQPKGTPGFEAFVAVAVIGSIALLRRKH</sequence>
<proteinExistence type="predicted"/>
<comment type="subcellular location">
    <subcellularLocation>
        <location evidence="2">Cell membrane</location>
        <topology evidence="2">Multi-pass membrane protein</topology>
    </subcellularLocation>
</comment>
<reference key="1">
    <citation type="journal article" date="1997" name="Nature">
        <title>The complete genome sequence of the hyperthermophilic, sulphate-reducing archaeon Archaeoglobus fulgidus.</title>
        <authorList>
            <person name="Klenk H.-P."/>
            <person name="Clayton R.A."/>
            <person name="Tomb J.-F."/>
            <person name="White O."/>
            <person name="Nelson K.E."/>
            <person name="Ketchum K.A."/>
            <person name="Dodson R.J."/>
            <person name="Gwinn M.L."/>
            <person name="Hickey E.K."/>
            <person name="Peterson J.D."/>
            <person name="Richardson D.L."/>
            <person name="Kerlavage A.R."/>
            <person name="Graham D.E."/>
            <person name="Kyrpides N.C."/>
            <person name="Fleischmann R.D."/>
            <person name="Quackenbush J."/>
            <person name="Lee N.H."/>
            <person name="Sutton G.G."/>
            <person name="Gill S.R."/>
            <person name="Kirkness E.F."/>
            <person name="Dougherty B.A."/>
            <person name="McKenney K."/>
            <person name="Adams M.D."/>
            <person name="Loftus B.J."/>
            <person name="Peterson S.N."/>
            <person name="Reich C.I."/>
            <person name="McNeil L.K."/>
            <person name="Badger J.H."/>
            <person name="Glodek A."/>
            <person name="Zhou L."/>
            <person name="Overbeek R."/>
            <person name="Gocayne J.D."/>
            <person name="Weidman J.F."/>
            <person name="McDonald L.A."/>
            <person name="Utterback T.R."/>
            <person name="Cotton M.D."/>
            <person name="Spriggs T."/>
            <person name="Artiach P."/>
            <person name="Kaine B.P."/>
            <person name="Sykes S.M."/>
            <person name="Sadow P.W."/>
            <person name="D'Andrea K.P."/>
            <person name="Bowman C."/>
            <person name="Fujii C."/>
            <person name="Garland S.A."/>
            <person name="Mason T.M."/>
            <person name="Olsen G.J."/>
            <person name="Fraser C.M."/>
            <person name="Smith H.O."/>
            <person name="Woese C.R."/>
            <person name="Venter J.C."/>
        </authorList>
    </citation>
    <scope>NUCLEOTIDE SEQUENCE [LARGE SCALE GENOMIC DNA]</scope>
    <source>
        <strain>ATCC 49558 / DSM 4304 / JCM 9628 / NBRC 100126 / VC-16</strain>
    </source>
</reference>
<name>Y1949_ARCFU</name>
<feature type="chain" id="PRO_0000128076" description="Uncharacterized protein AF_1949">
    <location>
        <begin position="1"/>
        <end position="165"/>
    </location>
</feature>
<feature type="transmembrane region" description="Helical" evidence="1">
    <location>
        <begin position="7"/>
        <end position="27"/>
    </location>
</feature>
<feature type="transmembrane region" description="Helical" evidence="1">
    <location>
        <begin position="141"/>
        <end position="161"/>
    </location>
</feature>
<organism>
    <name type="scientific">Archaeoglobus fulgidus (strain ATCC 49558 / DSM 4304 / JCM 9628 / NBRC 100126 / VC-16)</name>
    <dbReference type="NCBI Taxonomy" id="224325"/>
    <lineage>
        <taxon>Archaea</taxon>
        <taxon>Methanobacteriati</taxon>
        <taxon>Methanobacteriota</taxon>
        <taxon>Archaeoglobi</taxon>
        <taxon>Archaeoglobales</taxon>
        <taxon>Archaeoglobaceae</taxon>
        <taxon>Archaeoglobus</taxon>
    </lineage>
</organism>
<gene>
    <name type="ordered locus">AF_1949</name>
</gene>